<reference key="1">
    <citation type="journal article" date="1997" name="J. Bacteriol.">
        <title>Isolation and characterization of the lacA gene encoding beta-galactosidase in Bacillus subtilis and a regulator gene, lacR.</title>
        <authorList>
            <person name="Daniel R.A."/>
            <person name="Haiech J."/>
            <person name="Denizot F."/>
            <person name="Errington J."/>
        </authorList>
    </citation>
    <scope>NUCLEOTIDE SEQUENCE [GENOMIC DNA]</scope>
    <source>
        <strain>168</strain>
    </source>
</reference>
<reference key="2">
    <citation type="submission" date="1997-04" db="EMBL/GenBank/DDBJ databases">
        <authorList>
            <person name="Denizot F."/>
        </authorList>
    </citation>
    <scope>NUCLEOTIDE SEQUENCE [GENOMIC DNA]</scope>
    <source>
        <strain>168</strain>
    </source>
</reference>
<reference key="3">
    <citation type="journal article" date="1997" name="Nature">
        <title>The complete genome sequence of the Gram-positive bacterium Bacillus subtilis.</title>
        <authorList>
            <person name="Kunst F."/>
            <person name="Ogasawara N."/>
            <person name="Moszer I."/>
            <person name="Albertini A.M."/>
            <person name="Alloni G."/>
            <person name="Azevedo V."/>
            <person name="Bertero M.G."/>
            <person name="Bessieres P."/>
            <person name="Bolotin A."/>
            <person name="Borchert S."/>
            <person name="Borriss R."/>
            <person name="Boursier L."/>
            <person name="Brans A."/>
            <person name="Braun M."/>
            <person name="Brignell S.C."/>
            <person name="Bron S."/>
            <person name="Brouillet S."/>
            <person name="Bruschi C.V."/>
            <person name="Caldwell B."/>
            <person name="Capuano V."/>
            <person name="Carter N.M."/>
            <person name="Choi S.-K."/>
            <person name="Codani J.-J."/>
            <person name="Connerton I.F."/>
            <person name="Cummings N.J."/>
            <person name="Daniel R.A."/>
            <person name="Denizot F."/>
            <person name="Devine K.M."/>
            <person name="Duesterhoeft A."/>
            <person name="Ehrlich S.D."/>
            <person name="Emmerson P.T."/>
            <person name="Entian K.-D."/>
            <person name="Errington J."/>
            <person name="Fabret C."/>
            <person name="Ferrari E."/>
            <person name="Foulger D."/>
            <person name="Fritz C."/>
            <person name="Fujita M."/>
            <person name="Fujita Y."/>
            <person name="Fuma S."/>
            <person name="Galizzi A."/>
            <person name="Galleron N."/>
            <person name="Ghim S.-Y."/>
            <person name="Glaser P."/>
            <person name="Goffeau A."/>
            <person name="Golightly E.J."/>
            <person name="Grandi G."/>
            <person name="Guiseppi G."/>
            <person name="Guy B.J."/>
            <person name="Haga K."/>
            <person name="Haiech J."/>
            <person name="Harwood C.R."/>
            <person name="Henaut A."/>
            <person name="Hilbert H."/>
            <person name="Holsappel S."/>
            <person name="Hosono S."/>
            <person name="Hullo M.-F."/>
            <person name="Itaya M."/>
            <person name="Jones L.-M."/>
            <person name="Joris B."/>
            <person name="Karamata D."/>
            <person name="Kasahara Y."/>
            <person name="Klaerr-Blanchard M."/>
            <person name="Klein C."/>
            <person name="Kobayashi Y."/>
            <person name="Koetter P."/>
            <person name="Koningstein G."/>
            <person name="Krogh S."/>
            <person name="Kumano M."/>
            <person name="Kurita K."/>
            <person name="Lapidus A."/>
            <person name="Lardinois S."/>
            <person name="Lauber J."/>
            <person name="Lazarevic V."/>
            <person name="Lee S.-M."/>
            <person name="Levine A."/>
            <person name="Liu H."/>
            <person name="Masuda S."/>
            <person name="Mauel C."/>
            <person name="Medigue C."/>
            <person name="Medina N."/>
            <person name="Mellado R.P."/>
            <person name="Mizuno M."/>
            <person name="Moestl D."/>
            <person name="Nakai S."/>
            <person name="Noback M."/>
            <person name="Noone D."/>
            <person name="O'Reilly M."/>
            <person name="Ogawa K."/>
            <person name="Ogiwara A."/>
            <person name="Oudega B."/>
            <person name="Park S.-H."/>
            <person name="Parro V."/>
            <person name="Pohl T.M."/>
            <person name="Portetelle D."/>
            <person name="Porwollik S."/>
            <person name="Prescott A.M."/>
            <person name="Presecan E."/>
            <person name="Pujic P."/>
            <person name="Purnelle B."/>
            <person name="Rapoport G."/>
            <person name="Rey M."/>
            <person name="Reynolds S."/>
            <person name="Rieger M."/>
            <person name="Rivolta C."/>
            <person name="Rocha E."/>
            <person name="Roche B."/>
            <person name="Rose M."/>
            <person name="Sadaie Y."/>
            <person name="Sato T."/>
            <person name="Scanlan E."/>
            <person name="Schleich S."/>
            <person name="Schroeter R."/>
            <person name="Scoffone F."/>
            <person name="Sekiguchi J."/>
            <person name="Sekowska A."/>
            <person name="Seror S.J."/>
            <person name="Serror P."/>
            <person name="Shin B.-S."/>
            <person name="Soldo B."/>
            <person name="Sorokin A."/>
            <person name="Tacconi E."/>
            <person name="Takagi T."/>
            <person name="Takahashi H."/>
            <person name="Takemaru K."/>
            <person name="Takeuchi M."/>
            <person name="Tamakoshi A."/>
            <person name="Tanaka T."/>
            <person name="Terpstra P."/>
            <person name="Tognoni A."/>
            <person name="Tosato V."/>
            <person name="Uchiyama S."/>
            <person name="Vandenbol M."/>
            <person name="Vannier F."/>
            <person name="Vassarotti A."/>
            <person name="Viari A."/>
            <person name="Wambutt R."/>
            <person name="Wedler E."/>
            <person name="Wedler H."/>
            <person name="Weitzenegger T."/>
            <person name="Winters P."/>
            <person name="Wipat A."/>
            <person name="Yamamoto H."/>
            <person name="Yamane K."/>
            <person name="Yasumoto K."/>
            <person name="Yata K."/>
            <person name="Yoshida K."/>
            <person name="Yoshikawa H.-F."/>
            <person name="Zumstein E."/>
            <person name="Yoshikawa H."/>
            <person name="Danchin A."/>
        </authorList>
    </citation>
    <scope>NUCLEOTIDE SEQUENCE [LARGE SCALE GENOMIC DNA]</scope>
    <source>
        <strain>168</strain>
    </source>
</reference>
<reference key="4">
    <citation type="journal article" date="2006" name="Appl. Environ. Microbiol.">
        <title>Bioinformatic, genetic, and biochemical evidence that some glycoside hydrolase family 42 beta-galactosidases are arabinogalactan type I oligomer hydrolases.</title>
        <authorList>
            <person name="Shipkowski S."/>
            <person name="Brenchley J.E."/>
        </authorList>
    </citation>
    <scope>FUNCTION IN GALACTAN DEGRADATION</scope>
    <scope>CATALYTIC ACTIVITY</scope>
    <scope>SUBCELLULAR LOCATION</scope>
</reference>
<reference key="5">
    <citation type="journal article" date="2016" name="J. Bacteriol.">
        <title>Role of the ganSPQAB operon in degradation of galactan by Bacillus subtilis.</title>
        <authorList>
            <person name="Watzlawick H."/>
            <person name="Morabbi Heravi K."/>
            <person name="Altenbuchner J."/>
        </authorList>
    </citation>
    <scope>FUNCTION</scope>
    <scope>CATALYTIC ACTIVITY</scope>
    <scope>BIOPHYSICOCHEMICAL PROPERTIES</scope>
    <scope>INDUCTION</scope>
</reference>
<organism>
    <name type="scientific">Bacillus subtilis (strain 168)</name>
    <dbReference type="NCBI Taxonomy" id="224308"/>
    <lineage>
        <taxon>Bacteria</taxon>
        <taxon>Bacillati</taxon>
        <taxon>Bacillota</taxon>
        <taxon>Bacilli</taxon>
        <taxon>Bacillales</taxon>
        <taxon>Bacillaceae</taxon>
        <taxon>Bacillus</taxon>
    </lineage>
</organism>
<protein>
    <recommendedName>
        <fullName evidence="6">Endo-beta-1,4-galactanase</fullName>
        <shortName evidence="6">Galactanase</shortName>
        <ecNumber evidence="4">3.2.1.-</ecNumber>
    </recommendedName>
    <alternativeName>
        <fullName evidence="7">Arabinogalactan endo-beta-1,4-galactanase</fullName>
        <ecNumber evidence="8">3.2.1.89</ecNumber>
    </alternativeName>
</protein>
<gene>
    <name evidence="6" type="primary">ganB</name>
    <name evidence="5" type="synonym">galA</name>
    <name type="synonym">yvfO</name>
    <name type="ordered locus">BSU34120</name>
</gene>
<name>GANB_BACSU</name>
<comment type="function">
    <text evidence="3 4 8">Involved in galactan degradation (PubMed:17056685, PubMed:27501980). Degrades arabinose-free galactan to galactooligosaccharides, producing galactotetraose as the main product along with galactotriose, galactobiose, and galactose (PubMed:27501980). Is also able to degrade galactotetraose, galactotriose and galactobiose, suggesting an additional exo-mode of activity (PubMed:27501980). May hydrolyze the beta-1,4-galactan linkages of the galactan portion of arabinogalactan type I, a pectic plant polysaccharide from which most of the arabinose has been removed (Probable).</text>
</comment>
<comment type="catalytic activity">
    <reaction evidence="8">
        <text>The enzyme specifically hydrolyzes (1-&gt;4)-beta-D-galactosidic linkages in type I arabinogalactans.</text>
        <dbReference type="EC" id="3.2.1.89"/>
    </reaction>
</comment>
<comment type="cofactor">
    <cofactor evidence="1">
        <name>Ca(2+)</name>
        <dbReference type="ChEBI" id="CHEBI:29108"/>
    </cofactor>
    <text evidence="1">Binds 1 Ca(2+) ion per subunit.</text>
</comment>
<comment type="biophysicochemical properties">
    <phDependence>
        <text evidence="4">Optimum pH is 6.5 with AZCL galactan as substrate.</text>
    </phDependence>
    <temperatureDependence>
        <text evidence="4">Optimum temperature is 50 degrees Celsius with AZCL galactan as substrate.</text>
    </temperatureDependence>
</comment>
<comment type="subcellular location">
    <subcellularLocation>
        <location evidence="8">Secreted</location>
    </subcellularLocation>
</comment>
<comment type="induction">
    <text evidence="4">Repressed by the transcriptional regulator GanR and induced by galactobiose. Also repressed by glucose.</text>
</comment>
<comment type="similarity">
    <text evidence="7">Belongs to the glycosyl hydrolase 53 family.</text>
</comment>
<feature type="signal peptide" evidence="2">
    <location>
        <begin position="1"/>
        <end position="21"/>
    </location>
</feature>
<feature type="chain" id="PRO_0000012222" description="Endo-beta-1,4-galactanase">
    <location>
        <begin position="22"/>
        <end position="429"/>
    </location>
</feature>
<feature type="active site" description="Proton donor" evidence="1">
    <location>
        <position position="194"/>
    </location>
</feature>
<feature type="active site" description="Nucleophile" evidence="1">
    <location>
        <position position="292"/>
    </location>
</feature>
<feature type="binding site" evidence="1">
    <location>
        <begin position="146"/>
        <end position="149"/>
    </location>
    <ligand>
        <name>substrate</name>
    </ligand>
</feature>
<feature type="binding site" evidence="1">
    <location>
        <begin position="233"/>
        <end position="234"/>
    </location>
    <ligand>
        <name>substrate</name>
    </ligand>
</feature>
<feature type="binding site" evidence="1">
    <location>
        <position position="267"/>
    </location>
    <ligand>
        <name>substrate</name>
    </ligand>
</feature>
<feature type="binding site" evidence="1">
    <location>
        <position position="296"/>
    </location>
    <ligand>
        <name>substrate</name>
    </ligand>
</feature>
<feature type="binding site" evidence="1">
    <location>
        <position position="301"/>
    </location>
    <ligand>
        <name>Ca(2+)</name>
        <dbReference type="ChEBI" id="CHEBI:29108"/>
    </ligand>
</feature>
<feature type="binding site" evidence="1">
    <location>
        <position position="303"/>
    </location>
    <ligand>
        <name>Ca(2+)</name>
        <dbReference type="ChEBI" id="CHEBI:29108"/>
    </ligand>
</feature>
<feature type="binding site" evidence="1">
    <location>
        <position position="305"/>
    </location>
    <ligand>
        <name>Ca(2+)</name>
        <dbReference type="ChEBI" id="CHEBI:29108"/>
    </ligand>
</feature>
<feature type="binding site" evidence="1">
    <location>
        <position position="307"/>
    </location>
    <ligand>
        <name>Ca(2+)</name>
        <dbReference type="ChEBI" id="CHEBI:29108"/>
    </ligand>
</feature>
<feature type="binding site" evidence="1">
    <location>
        <position position="311"/>
    </location>
    <ligand>
        <name>substrate</name>
    </ligand>
</feature>
<feature type="binding site" evidence="1">
    <location>
        <position position="388"/>
    </location>
    <ligand>
        <name>substrate</name>
    </ligand>
</feature>
<feature type="binding site" evidence="1">
    <location>
        <position position="396"/>
    </location>
    <ligand>
        <name>Ca(2+)</name>
        <dbReference type="ChEBI" id="CHEBI:29108"/>
    </ligand>
</feature>
<feature type="binding site" evidence="1">
    <location>
        <position position="399"/>
    </location>
    <ligand>
        <name>Ca(2+)</name>
        <dbReference type="ChEBI" id="CHEBI:29108"/>
    </ligand>
</feature>
<proteinExistence type="evidence at protein level"/>
<keyword id="KW-0106">Calcium</keyword>
<keyword id="KW-0326">Glycosidase</keyword>
<keyword id="KW-0378">Hydrolase</keyword>
<keyword id="KW-0479">Metal-binding</keyword>
<keyword id="KW-1185">Reference proteome</keyword>
<keyword id="KW-0964">Secreted</keyword>
<keyword id="KW-0732">Signal</keyword>
<sequence length="429" mass="47279">MKSKVKMFFAAAIVWSACSSTGYAAAIEKEKHVSELRAEDLFVKKVEGMNKDFIKGADVSSVIALENSGVTFYNTNGKRQDIFTTLKQAGVNYVRVRIWNHPYDSNGNGYGGGNNDVQKAIEIGKRATANGMKVLADFHYSDFWADPAKQKVPKAWANLSFEAKKAKLYEYTKQSLQKMIKEGVDIGMVQVGNETTGGFAGETDWTKMCQLFNEGSRAVRETNSNILVALHFTNPETAGRYSFIAETLSKNKVDYDVFASSYYPFWHGTLQNLTSVLKAVANTYGKKVMVAETSYTYTAEDGDGHGNTAPKSGQTLPYPISVQGQATAVRDVMEAVANTGKAGLGVFYWEPAWIPVGPKTQIEKNKVLWETYGSGWASSYAAEYDPEDAGKWYGGSAVDNQALFDFNGHPLPSLQVFQYAESGHIPKKR</sequence>
<dbReference type="EC" id="3.2.1.-" evidence="4"/>
<dbReference type="EC" id="3.2.1.89" evidence="8"/>
<dbReference type="EMBL" id="Z94043">
    <property type="protein sequence ID" value="CAB08009.1"/>
    <property type="molecule type" value="Genomic_DNA"/>
</dbReference>
<dbReference type="EMBL" id="AL009126">
    <property type="protein sequence ID" value="CAB15417.2"/>
    <property type="molecule type" value="Genomic_DNA"/>
</dbReference>
<dbReference type="PIR" id="F70038">
    <property type="entry name" value="F70038"/>
</dbReference>
<dbReference type="RefSeq" id="NP_391292.2">
    <property type="nucleotide sequence ID" value="NC_000964.3"/>
</dbReference>
<dbReference type="RefSeq" id="WP_003243128.1">
    <property type="nucleotide sequence ID" value="NZ_OZ025638.1"/>
</dbReference>
<dbReference type="SMR" id="O07013"/>
<dbReference type="FunCoup" id="O07013">
    <property type="interactions" value="140"/>
</dbReference>
<dbReference type="STRING" id="224308.BSU34120"/>
<dbReference type="CAZy" id="GH53">
    <property type="family name" value="Glycoside Hydrolase Family 53"/>
</dbReference>
<dbReference type="PaxDb" id="224308-BSU34120"/>
<dbReference type="EnsemblBacteria" id="CAB15417">
    <property type="protein sequence ID" value="CAB15417"/>
    <property type="gene ID" value="BSU_34120"/>
</dbReference>
<dbReference type="GeneID" id="937086"/>
<dbReference type="KEGG" id="bsu:BSU34120"/>
<dbReference type="PATRIC" id="fig|224308.179.peg.3699"/>
<dbReference type="eggNOG" id="COG3867">
    <property type="taxonomic scope" value="Bacteria"/>
</dbReference>
<dbReference type="InParanoid" id="O07013"/>
<dbReference type="OrthoDB" id="9768786at2"/>
<dbReference type="BioCyc" id="BSUB:BSU34120-MONOMER"/>
<dbReference type="BioCyc" id="MetaCyc:BSU34120-MONOMER"/>
<dbReference type="Proteomes" id="UP000001570">
    <property type="component" value="Chromosome"/>
</dbReference>
<dbReference type="GO" id="GO:0005576">
    <property type="term" value="C:extracellular region"/>
    <property type="evidence" value="ECO:0007669"/>
    <property type="project" value="UniProtKB-SubCell"/>
</dbReference>
<dbReference type="GO" id="GO:0031218">
    <property type="term" value="F:arabinogalactan endo-1,4-beta-galactosidase activity"/>
    <property type="evidence" value="ECO:0007669"/>
    <property type="project" value="UniProtKB-EC"/>
</dbReference>
<dbReference type="GO" id="GO:0015926">
    <property type="term" value="F:glucosidase activity"/>
    <property type="evidence" value="ECO:0007669"/>
    <property type="project" value="InterPro"/>
</dbReference>
<dbReference type="GO" id="GO:0046872">
    <property type="term" value="F:metal ion binding"/>
    <property type="evidence" value="ECO:0007669"/>
    <property type="project" value="UniProtKB-KW"/>
</dbReference>
<dbReference type="GO" id="GO:0045490">
    <property type="term" value="P:pectin catabolic process"/>
    <property type="evidence" value="ECO:0000318"/>
    <property type="project" value="GO_Central"/>
</dbReference>
<dbReference type="Gene3D" id="3.20.20.80">
    <property type="entry name" value="Glycosidases"/>
    <property type="match status" value="1"/>
</dbReference>
<dbReference type="InterPro" id="IPR011683">
    <property type="entry name" value="Glyco_hydro_53"/>
</dbReference>
<dbReference type="InterPro" id="IPR017853">
    <property type="entry name" value="Glycoside_hydrolase_SF"/>
</dbReference>
<dbReference type="PANTHER" id="PTHR34983">
    <property type="entry name" value="ARABINOGALACTAN ENDO-BETA-1,4-GALACTANASE A"/>
    <property type="match status" value="1"/>
</dbReference>
<dbReference type="PANTHER" id="PTHR34983:SF2">
    <property type="entry name" value="ENDO-BETA-1,4-GALACTANASE"/>
    <property type="match status" value="1"/>
</dbReference>
<dbReference type="Pfam" id="PF07745">
    <property type="entry name" value="Glyco_hydro_53"/>
    <property type="match status" value="1"/>
</dbReference>
<dbReference type="SUPFAM" id="SSF51445">
    <property type="entry name" value="(Trans)glycosidases"/>
    <property type="match status" value="1"/>
</dbReference>
<dbReference type="PROSITE" id="PS51257">
    <property type="entry name" value="PROKAR_LIPOPROTEIN"/>
    <property type="match status" value="1"/>
</dbReference>
<accession>O07013</accession>
<accession>O32260</accession>
<evidence type="ECO:0000250" key="1">
    <source>
        <dbReference type="UniProtKB" id="Q65CX5"/>
    </source>
</evidence>
<evidence type="ECO:0000255" key="2">
    <source>
        <dbReference type="PROSITE-ProRule" id="PRU00303"/>
    </source>
</evidence>
<evidence type="ECO:0000269" key="3">
    <source>
    </source>
</evidence>
<evidence type="ECO:0000269" key="4">
    <source>
    </source>
</evidence>
<evidence type="ECO:0000303" key="5">
    <source>
    </source>
</evidence>
<evidence type="ECO:0000303" key="6">
    <source>
    </source>
</evidence>
<evidence type="ECO:0000305" key="7"/>
<evidence type="ECO:0000305" key="8">
    <source>
    </source>
</evidence>